<protein>
    <recommendedName>
        <fullName evidence="5">Chi-conotoxin-like 2</fullName>
    </recommendedName>
    <alternativeName>
        <fullName evidence="5">Tx10c</fullName>
    </alternativeName>
</protein>
<accession>P86257</accession>
<feature type="peptide" id="PRO_0000371271" description="Chi-conotoxin-like 2" evidence="3">
    <location>
        <begin position="1"/>
        <end position="12"/>
    </location>
</feature>
<feature type="modified residue" description="Pyrrolidone carboxylic acid; partial" evidence="3 5">
    <location>
        <position position="1"/>
    </location>
</feature>
<feature type="modified residue" description="Methionine sulfoxide; partial" evidence="3">
    <location>
        <position position="8"/>
    </location>
</feature>
<feature type="modified residue" description="4-hydroxyproline" evidence="3">
    <location>
        <position position="11"/>
    </location>
</feature>
<feature type="modified residue" description="Cysteine amide" evidence="3">
    <location>
        <position position="12"/>
    </location>
</feature>
<feature type="disulfide bond" evidence="1">
    <location>
        <begin position="3"/>
        <end position="12"/>
    </location>
</feature>
<feature type="disulfide bond" evidence="1">
    <location>
        <begin position="4"/>
        <end position="9"/>
    </location>
</feature>
<organism>
    <name type="scientific">Conus textile</name>
    <name type="common">Cloth-of-gold cone</name>
    <dbReference type="NCBI Taxonomy" id="6494"/>
    <lineage>
        <taxon>Eukaryota</taxon>
        <taxon>Metazoa</taxon>
        <taxon>Spiralia</taxon>
        <taxon>Lophotrochozoa</taxon>
        <taxon>Mollusca</taxon>
        <taxon>Gastropoda</taxon>
        <taxon>Caenogastropoda</taxon>
        <taxon>Neogastropoda</taxon>
        <taxon>Conoidea</taxon>
        <taxon>Conidae</taxon>
        <taxon>Conus</taxon>
        <taxon>Cylinder</taxon>
    </lineage>
</organism>
<dbReference type="ConoServer" id="3754">
    <property type="toxin name" value="Tx10c"/>
</dbReference>
<dbReference type="GO" id="GO:0005576">
    <property type="term" value="C:extracellular region"/>
    <property type="evidence" value="ECO:0007669"/>
    <property type="project" value="UniProtKB-SubCell"/>
</dbReference>
<dbReference type="GO" id="GO:0090729">
    <property type="term" value="F:toxin activity"/>
    <property type="evidence" value="ECO:0007669"/>
    <property type="project" value="UniProtKB-KW"/>
</dbReference>
<reference key="1">
    <citation type="journal article" date="2009" name="Proc. Natl. Acad. Sci. U.S.A.">
        <title>Rapid sensitive analysis of cysteine rich peptide venom components.</title>
        <authorList>
            <person name="Ueberheide B.M."/>
            <person name="Fenyo D."/>
            <person name="Alewood P.F."/>
            <person name="Chait B.T."/>
        </authorList>
    </citation>
    <scope>PROTEIN SEQUENCE</scope>
    <scope>SUBCELLULAR LOCATION</scope>
    <scope>MASS SPECTROMETRY</scope>
    <scope>DISULFIDE BONDS</scope>
    <scope>PYROGLUTAMATE FORMATION AT GLN-1</scope>
    <scope>OXIDATION AT MET-8</scope>
    <scope>HYDROXYLATION AT PRO-11</scope>
    <scope>AMIDATION AT CYS-12</scope>
    <source>
        <tissue>Venom</tissue>
    </source>
</reference>
<reference key="2">
    <citation type="journal article" date="2012" name="J. Proteome Res.">
        <title>Constrained de novo sequencing of conotoxins.</title>
        <authorList>
            <person name="Bhatia S."/>
            <person name="Kil Y.J."/>
            <person name="Ueberheide B."/>
            <person name="Chait B.T."/>
            <person name="Tayo L."/>
            <person name="Cruz L."/>
            <person name="Lu B."/>
            <person name="Yates J.R. III"/>
            <person name="Bern M."/>
        </authorList>
    </citation>
    <scope>IDENTIFICATION BY MASS SPECTROMETRY</scope>
    <scope>SUBCELLULAR LOCATION</scope>
    <scope>HYDROXYLATION AT PRO-11</scope>
    <scope>AMIDATION AT CYS-12</scope>
    <source>
        <tissue>Venom</tissue>
    </source>
</reference>
<comment type="function">
    <text evidence="2">Chi-conotoxins inhibit the neuronal noradrenaline transporter (NET/SLC6A2).</text>
</comment>
<comment type="subcellular location">
    <subcellularLocation>
        <location evidence="3 4">Secreted</location>
    </subcellularLocation>
</comment>
<comment type="tissue specificity">
    <text evidence="6 7">Expressed by the venom duct.</text>
</comment>
<comment type="domain">
    <text evidence="5">The cysteine framework is X (CC-CX[hydroxyPro]C).</text>
</comment>
<comment type="PTM">
    <text evidence="3">Contains 2 disulfide bonds.</text>
</comment>
<comment type="mass spectrometry" mass="1372.449" error="0.02" method="Electrospray" evidence="3">
    <text>With pyroglutamate at Gln-1.</text>
</comment>
<comment type="mass spectrometry" mass="1389.479" error="0.02" method="Electrospray" evidence="3">
    <text>Without pyroglutamate at Gln-1.</text>
</comment>
<comment type="similarity">
    <text evidence="5">Belongs to the conotoxin T superfamily.</text>
</comment>
<sequence length="12" mass="1364">QTCCGYRMCVPC</sequence>
<name>CTAC_CONTE</name>
<evidence type="ECO:0000250" key="1">
    <source>
        <dbReference type="UniProtKB" id="P58807"/>
    </source>
</evidence>
<evidence type="ECO:0000250" key="2">
    <source>
        <dbReference type="UniProtKB" id="P58808"/>
    </source>
</evidence>
<evidence type="ECO:0000269" key="3">
    <source>
    </source>
</evidence>
<evidence type="ECO:0000269" key="4">
    <source>
    </source>
</evidence>
<evidence type="ECO:0000305" key="5"/>
<evidence type="ECO:0000305" key="6">
    <source>
    </source>
</evidence>
<evidence type="ECO:0000305" key="7">
    <source>
    </source>
</evidence>
<keyword id="KW-0027">Amidation</keyword>
<keyword id="KW-0903">Direct protein sequencing</keyword>
<keyword id="KW-1015">Disulfide bond</keyword>
<keyword id="KW-0379">Hydroxylation</keyword>
<keyword id="KW-0528">Neurotoxin</keyword>
<keyword id="KW-0558">Oxidation</keyword>
<keyword id="KW-0873">Pyrrolidone carboxylic acid</keyword>
<keyword id="KW-0964">Secreted</keyword>
<keyword id="KW-0800">Toxin</keyword>
<proteinExistence type="evidence at protein level"/>